<proteinExistence type="inferred from homology"/>
<feature type="chain" id="PRO_1000094380" description="Shikimate kinase">
    <location>
        <begin position="1"/>
        <end position="170"/>
    </location>
</feature>
<feature type="binding site" evidence="1">
    <location>
        <begin position="11"/>
        <end position="16"/>
    </location>
    <ligand>
        <name>ATP</name>
        <dbReference type="ChEBI" id="CHEBI:30616"/>
    </ligand>
</feature>
<feature type="binding site" evidence="1">
    <location>
        <position position="15"/>
    </location>
    <ligand>
        <name>Mg(2+)</name>
        <dbReference type="ChEBI" id="CHEBI:18420"/>
    </ligand>
</feature>
<feature type="binding site" evidence="1">
    <location>
        <position position="33"/>
    </location>
    <ligand>
        <name>substrate</name>
    </ligand>
</feature>
<feature type="binding site" evidence="1">
    <location>
        <position position="57"/>
    </location>
    <ligand>
        <name>substrate</name>
    </ligand>
</feature>
<feature type="binding site" evidence="1">
    <location>
        <position position="79"/>
    </location>
    <ligand>
        <name>substrate</name>
    </ligand>
</feature>
<feature type="binding site" evidence="1">
    <location>
        <position position="119"/>
    </location>
    <ligand>
        <name>ATP</name>
        <dbReference type="ChEBI" id="CHEBI:30616"/>
    </ligand>
</feature>
<feature type="binding site" evidence="1">
    <location>
        <position position="137"/>
    </location>
    <ligand>
        <name>substrate</name>
    </ligand>
</feature>
<keyword id="KW-0028">Amino-acid biosynthesis</keyword>
<keyword id="KW-0057">Aromatic amino acid biosynthesis</keyword>
<keyword id="KW-0067">ATP-binding</keyword>
<keyword id="KW-0963">Cytoplasm</keyword>
<keyword id="KW-0418">Kinase</keyword>
<keyword id="KW-0460">Magnesium</keyword>
<keyword id="KW-0479">Metal-binding</keyword>
<keyword id="KW-0547">Nucleotide-binding</keyword>
<keyword id="KW-0808">Transferase</keyword>
<dbReference type="EC" id="2.7.1.71" evidence="1"/>
<dbReference type="EMBL" id="CP000726">
    <property type="protein sequence ID" value="ABS32393.1"/>
    <property type="molecule type" value="Genomic_DNA"/>
</dbReference>
<dbReference type="RefSeq" id="WP_003358971.1">
    <property type="nucleotide sequence ID" value="NC_009697.1"/>
</dbReference>
<dbReference type="SMR" id="A7FUV4"/>
<dbReference type="KEGG" id="cba:CLB_1836"/>
<dbReference type="HOGENOM" id="CLU_057607_4_0_9"/>
<dbReference type="UniPathway" id="UPA00053">
    <property type="reaction ID" value="UER00088"/>
</dbReference>
<dbReference type="GO" id="GO:0005829">
    <property type="term" value="C:cytosol"/>
    <property type="evidence" value="ECO:0007669"/>
    <property type="project" value="TreeGrafter"/>
</dbReference>
<dbReference type="GO" id="GO:0005524">
    <property type="term" value="F:ATP binding"/>
    <property type="evidence" value="ECO:0007669"/>
    <property type="project" value="UniProtKB-UniRule"/>
</dbReference>
<dbReference type="GO" id="GO:0000287">
    <property type="term" value="F:magnesium ion binding"/>
    <property type="evidence" value="ECO:0007669"/>
    <property type="project" value="UniProtKB-UniRule"/>
</dbReference>
<dbReference type="GO" id="GO:0004765">
    <property type="term" value="F:shikimate kinase activity"/>
    <property type="evidence" value="ECO:0007669"/>
    <property type="project" value="UniProtKB-UniRule"/>
</dbReference>
<dbReference type="GO" id="GO:0008652">
    <property type="term" value="P:amino acid biosynthetic process"/>
    <property type="evidence" value="ECO:0007669"/>
    <property type="project" value="UniProtKB-KW"/>
</dbReference>
<dbReference type="GO" id="GO:0009073">
    <property type="term" value="P:aromatic amino acid family biosynthetic process"/>
    <property type="evidence" value="ECO:0007669"/>
    <property type="project" value="UniProtKB-KW"/>
</dbReference>
<dbReference type="GO" id="GO:0009423">
    <property type="term" value="P:chorismate biosynthetic process"/>
    <property type="evidence" value="ECO:0007669"/>
    <property type="project" value="UniProtKB-UniRule"/>
</dbReference>
<dbReference type="CDD" id="cd00464">
    <property type="entry name" value="SK"/>
    <property type="match status" value="1"/>
</dbReference>
<dbReference type="FunFam" id="3.40.50.300:FF:002322">
    <property type="entry name" value="Shikimate kinase"/>
    <property type="match status" value="1"/>
</dbReference>
<dbReference type="Gene3D" id="3.40.50.300">
    <property type="entry name" value="P-loop containing nucleotide triphosphate hydrolases"/>
    <property type="match status" value="1"/>
</dbReference>
<dbReference type="HAMAP" id="MF_00109">
    <property type="entry name" value="Shikimate_kinase"/>
    <property type="match status" value="1"/>
</dbReference>
<dbReference type="InterPro" id="IPR027417">
    <property type="entry name" value="P-loop_NTPase"/>
</dbReference>
<dbReference type="InterPro" id="IPR031322">
    <property type="entry name" value="Shikimate/glucono_kinase"/>
</dbReference>
<dbReference type="InterPro" id="IPR000623">
    <property type="entry name" value="Shikimate_kinase/TSH1"/>
</dbReference>
<dbReference type="PANTHER" id="PTHR21087">
    <property type="entry name" value="SHIKIMATE KINASE"/>
    <property type="match status" value="1"/>
</dbReference>
<dbReference type="PANTHER" id="PTHR21087:SF16">
    <property type="entry name" value="SHIKIMATE KINASE 1, CHLOROPLASTIC"/>
    <property type="match status" value="1"/>
</dbReference>
<dbReference type="Pfam" id="PF01202">
    <property type="entry name" value="SKI"/>
    <property type="match status" value="1"/>
</dbReference>
<dbReference type="PRINTS" id="PR01100">
    <property type="entry name" value="SHIKIMTKNASE"/>
</dbReference>
<dbReference type="SUPFAM" id="SSF52540">
    <property type="entry name" value="P-loop containing nucleoside triphosphate hydrolases"/>
    <property type="match status" value="1"/>
</dbReference>
<gene>
    <name evidence="1" type="primary">aroK</name>
    <name type="ordered locus">CLB_1836</name>
</gene>
<name>AROK_CLOB1</name>
<organism>
    <name type="scientific">Clostridium botulinum (strain ATCC 19397 / Type A)</name>
    <dbReference type="NCBI Taxonomy" id="441770"/>
    <lineage>
        <taxon>Bacteria</taxon>
        <taxon>Bacillati</taxon>
        <taxon>Bacillota</taxon>
        <taxon>Clostridia</taxon>
        <taxon>Eubacteriales</taxon>
        <taxon>Clostridiaceae</taxon>
        <taxon>Clostridium</taxon>
    </lineage>
</organism>
<comment type="function">
    <text evidence="1">Catalyzes the specific phosphorylation of the 3-hydroxyl group of shikimic acid using ATP as a cosubstrate.</text>
</comment>
<comment type="catalytic activity">
    <reaction evidence="1">
        <text>shikimate + ATP = 3-phosphoshikimate + ADP + H(+)</text>
        <dbReference type="Rhea" id="RHEA:13121"/>
        <dbReference type="ChEBI" id="CHEBI:15378"/>
        <dbReference type="ChEBI" id="CHEBI:30616"/>
        <dbReference type="ChEBI" id="CHEBI:36208"/>
        <dbReference type="ChEBI" id="CHEBI:145989"/>
        <dbReference type="ChEBI" id="CHEBI:456216"/>
        <dbReference type="EC" id="2.7.1.71"/>
    </reaction>
</comment>
<comment type="cofactor">
    <cofactor evidence="1">
        <name>Mg(2+)</name>
        <dbReference type="ChEBI" id="CHEBI:18420"/>
    </cofactor>
    <text evidence="1">Binds 1 Mg(2+) ion per subunit.</text>
</comment>
<comment type="pathway">
    <text evidence="1">Metabolic intermediate biosynthesis; chorismate biosynthesis; chorismate from D-erythrose 4-phosphate and phosphoenolpyruvate: step 5/7.</text>
</comment>
<comment type="subunit">
    <text evidence="1">Monomer.</text>
</comment>
<comment type="subcellular location">
    <subcellularLocation>
        <location evidence="1">Cytoplasm</location>
    </subcellularLocation>
</comment>
<comment type="similarity">
    <text evidence="1">Belongs to the shikimate kinase family.</text>
</comment>
<evidence type="ECO:0000255" key="1">
    <source>
        <dbReference type="HAMAP-Rule" id="MF_00109"/>
    </source>
</evidence>
<sequence length="170" mass="20068">MENIVLIGMPLSGKSTLGRELSKILKYDLIDTDTLIEEMEDKSIKEIFKIYGEDYFREKELKIINKLKKESNKVISTGGGLPIYNKNIYELKKIGFTVYLKVPLEELIKRMVKKEYDTRPLLKNNDTKFLEEMYKNRIEIYEKAHTIICNTNYKESLITIVRAYKKWKGI</sequence>
<reference key="1">
    <citation type="journal article" date="2007" name="PLoS ONE">
        <title>Analysis of the neurotoxin complex genes in Clostridium botulinum A1-A4 and B1 strains: BoNT/A3, /Ba4 and /B1 clusters are located within plasmids.</title>
        <authorList>
            <person name="Smith T.J."/>
            <person name="Hill K.K."/>
            <person name="Foley B.T."/>
            <person name="Detter J.C."/>
            <person name="Munk A.C."/>
            <person name="Bruce D.C."/>
            <person name="Doggett N.A."/>
            <person name="Smith L.A."/>
            <person name="Marks J.D."/>
            <person name="Xie G."/>
            <person name="Brettin T.S."/>
        </authorList>
    </citation>
    <scope>NUCLEOTIDE SEQUENCE [LARGE SCALE GENOMIC DNA]</scope>
    <source>
        <strain>ATCC 19397 / Type A</strain>
    </source>
</reference>
<protein>
    <recommendedName>
        <fullName evidence="1">Shikimate kinase</fullName>
        <shortName evidence="1">SK</shortName>
        <ecNumber evidence="1">2.7.1.71</ecNumber>
    </recommendedName>
</protein>
<accession>A7FUV4</accession>